<reference key="1">
    <citation type="submission" date="2004-02" db="EMBL/GenBank/DDBJ databases">
        <title>Impaired cytoplasmic localization and nuclear accumulation of a novel gene product, hFLEG1, associated with hepatocellular carcinoma development.</title>
        <authorList>
            <person name="Koike N."/>
            <person name="Sumii M."/>
            <person name="Ikura T."/>
            <person name="Masuda Y."/>
            <person name="Wakida K."/>
            <person name="Uchida T."/>
            <person name="Asahara T."/>
            <person name="Usui T."/>
            <person name="Shimamoto F."/>
            <person name="Chayama K."/>
            <person name="Fukumoto M."/>
            <person name="Kamiya K."/>
        </authorList>
    </citation>
    <scope>NUCLEOTIDE SEQUENCE [MRNA] (ISOFORM 2)</scope>
</reference>
<reference key="2">
    <citation type="journal article" date="2005" name="Science">
        <title>The transcriptional landscape of the mammalian genome.</title>
        <authorList>
            <person name="Carninci P."/>
            <person name="Kasukawa T."/>
            <person name="Katayama S."/>
            <person name="Gough J."/>
            <person name="Frith M.C."/>
            <person name="Maeda N."/>
            <person name="Oyama R."/>
            <person name="Ravasi T."/>
            <person name="Lenhard B."/>
            <person name="Wells C."/>
            <person name="Kodzius R."/>
            <person name="Shimokawa K."/>
            <person name="Bajic V.B."/>
            <person name="Brenner S.E."/>
            <person name="Batalov S."/>
            <person name="Forrest A.R."/>
            <person name="Zavolan M."/>
            <person name="Davis M.J."/>
            <person name="Wilming L.G."/>
            <person name="Aidinis V."/>
            <person name="Allen J.E."/>
            <person name="Ambesi-Impiombato A."/>
            <person name="Apweiler R."/>
            <person name="Aturaliya R.N."/>
            <person name="Bailey T.L."/>
            <person name="Bansal M."/>
            <person name="Baxter L."/>
            <person name="Beisel K.W."/>
            <person name="Bersano T."/>
            <person name="Bono H."/>
            <person name="Chalk A.M."/>
            <person name="Chiu K.P."/>
            <person name="Choudhary V."/>
            <person name="Christoffels A."/>
            <person name="Clutterbuck D.R."/>
            <person name="Crowe M.L."/>
            <person name="Dalla E."/>
            <person name="Dalrymple B.P."/>
            <person name="de Bono B."/>
            <person name="Della Gatta G."/>
            <person name="di Bernardo D."/>
            <person name="Down T."/>
            <person name="Engstrom P."/>
            <person name="Fagiolini M."/>
            <person name="Faulkner G."/>
            <person name="Fletcher C.F."/>
            <person name="Fukushima T."/>
            <person name="Furuno M."/>
            <person name="Futaki S."/>
            <person name="Gariboldi M."/>
            <person name="Georgii-Hemming P."/>
            <person name="Gingeras T.R."/>
            <person name="Gojobori T."/>
            <person name="Green R.E."/>
            <person name="Gustincich S."/>
            <person name="Harbers M."/>
            <person name="Hayashi Y."/>
            <person name="Hensch T.K."/>
            <person name="Hirokawa N."/>
            <person name="Hill D."/>
            <person name="Huminiecki L."/>
            <person name="Iacono M."/>
            <person name="Ikeo K."/>
            <person name="Iwama A."/>
            <person name="Ishikawa T."/>
            <person name="Jakt M."/>
            <person name="Kanapin A."/>
            <person name="Katoh M."/>
            <person name="Kawasawa Y."/>
            <person name="Kelso J."/>
            <person name="Kitamura H."/>
            <person name="Kitano H."/>
            <person name="Kollias G."/>
            <person name="Krishnan S.P."/>
            <person name="Kruger A."/>
            <person name="Kummerfeld S.K."/>
            <person name="Kurochkin I.V."/>
            <person name="Lareau L.F."/>
            <person name="Lazarevic D."/>
            <person name="Lipovich L."/>
            <person name="Liu J."/>
            <person name="Liuni S."/>
            <person name="McWilliam S."/>
            <person name="Madan Babu M."/>
            <person name="Madera M."/>
            <person name="Marchionni L."/>
            <person name="Matsuda H."/>
            <person name="Matsuzawa S."/>
            <person name="Miki H."/>
            <person name="Mignone F."/>
            <person name="Miyake S."/>
            <person name="Morris K."/>
            <person name="Mottagui-Tabar S."/>
            <person name="Mulder N."/>
            <person name="Nakano N."/>
            <person name="Nakauchi H."/>
            <person name="Ng P."/>
            <person name="Nilsson R."/>
            <person name="Nishiguchi S."/>
            <person name="Nishikawa S."/>
            <person name="Nori F."/>
            <person name="Ohara O."/>
            <person name="Okazaki Y."/>
            <person name="Orlando V."/>
            <person name="Pang K.C."/>
            <person name="Pavan W.J."/>
            <person name="Pavesi G."/>
            <person name="Pesole G."/>
            <person name="Petrovsky N."/>
            <person name="Piazza S."/>
            <person name="Reed J."/>
            <person name="Reid J.F."/>
            <person name="Ring B.Z."/>
            <person name="Ringwald M."/>
            <person name="Rost B."/>
            <person name="Ruan Y."/>
            <person name="Salzberg S.L."/>
            <person name="Sandelin A."/>
            <person name="Schneider C."/>
            <person name="Schoenbach C."/>
            <person name="Sekiguchi K."/>
            <person name="Semple C.A."/>
            <person name="Seno S."/>
            <person name="Sessa L."/>
            <person name="Sheng Y."/>
            <person name="Shibata Y."/>
            <person name="Shimada H."/>
            <person name="Shimada K."/>
            <person name="Silva D."/>
            <person name="Sinclair B."/>
            <person name="Sperling S."/>
            <person name="Stupka E."/>
            <person name="Sugiura K."/>
            <person name="Sultana R."/>
            <person name="Takenaka Y."/>
            <person name="Taki K."/>
            <person name="Tammoja K."/>
            <person name="Tan S.L."/>
            <person name="Tang S."/>
            <person name="Taylor M.S."/>
            <person name="Tegner J."/>
            <person name="Teichmann S.A."/>
            <person name="Ueda H.R."/>
            <person name="van Nimwegen E."/>
            <person name="Verardo R."/>
            <person name="Wei C.L."/>
            <person name="Yagi K."/>
            <person name="Yamanishi H."/>
            <person name="Zabarovsky E."/>
            <person name="Zhu S."/>
            <person name="Zimmer A."/>
            <person name="Hide W."/>
            <person name="Bult C."/>
            <person name="Grimmond S.M."/>
            <person name="Teasdale R.D."/>
            <person name="Liu E.T."/>
            <person name="Brusic V."/>
            <person name="Quackenbush J."/>
            <person name="Wahlestedt C."/>
            <person name="Mattick J.S."/>
            <person name="Hume D.A."/>
            <person name="Kai C."/>
            <person name="Sasaki D."/>
            <person name="Tomaru Y."/>
            <person name="Fukuda S."/>
            <person name="Kanamori-Katayama M."/>
            <person name="Suzuki M."/>
            <person name="Aoki J."/>
            <person name="Arakawa T."/>
            <person name="Iida J."/>
            <person name="Imamura K."/>
            <person name="Itoh M."/>
            <person name="Kato T."/>
            <person name="Kawaji H."/>
            <person name="Kawagashira N."/>
            <person name="Kawashima T."/>
            <person name="Kojima M."/>
            <person name="Kondo S."/>
            <person name="Konno H."/>
            <person name="Nakano K."/>
            <person name="Ninomiya N."/>
            <person name="Nishio T."/>
            <person name="Okada M."/>
            <person name="Plessy C."/>
            <person name="Shibata K."/>
            <person name="Shiraki T."/>
            <person name="Suzuki S."/>
            <person name="Tagami M."/>
            <person name="Waki K."/>
            <person name="Watahiki A."/>
            <person name="Okamura-Oho Y."/>
            <person name="Suzuki H."/>
            <person name="Kawai J."/>
            <person name="Hayashizaki Y."/>
        </authorList>
    </citation>
    <scope>NUCLEOTIDE SEQUENCE [LARGE SCALE MRNA] (ISOFORM 3)</scope>
    <source>
        <strain>C57BL/6J</strain>
        <tissue>Cerebellum</tissue>
    </source>
</reference>
<reference key="3">
    <citation type="journal article" date="2004" name="Genome Res.">
        <title>The status, quality, and expansion of the NIH full-length cDNA project: the Mammalian Gene Collection (MGC).</title>
        <authorList>
            <consortium name="The MGC Project Team"/>
        </authorList>
    </citation>
    <scope>NUCLEOTIDE SEQUENCE [LARGE SCALE MRNA] (ISOFORMS 1 AND 3)</scope>
    <source>
        <strain>C57BL/6J</strain>
        <tissue>Brain</tissue>
    </source>
</reference>
<reference key="4">
    <citation type="journal article" date="2010" name="Cell">
        <title>A tissue-specific atlas of mouse protein phosphorylation and expression.</title>
        <authorList>
            <person name="Huttlin E.L."/>
            <person name="Jedrychowski M.P."/>
            <person name="Elias J.E."/>
            <person name="Goswami T."/>
            <person name="Rad R."/>
            <person name="Beausoleil S.A."/>
            <person name="Villen J."/>
            <person name="Haas W."/>
            <person name="Sowa M.E."/>
            <person name="Gygi S.P."/>
        </authorList>
    </citation>
    <scope>PHOSPHORYLATION [LARGE SCALE ANALYSIS] AT SER-388</scope>
    <scope>IDENTIFICATION BY MASS SPECTROMETRY [LARGE SCALE ANALYSIS]</scope>
    <source>
        <tissue>Spleen</tissue>
        <tissue>Testis</tissue>
    </source>
</reference>
<proteinExistence type="evidence at protein level"/>
<evidence type="ECO:0000250" key="1"/>
<evidence type="ECO:0000250" key="2">
    <source>
        <dbReference type="UniProtKB" id="Q8NCD3"/>
    </source>
</evidence>
<evidence type="ECO:0000256" key="3">
    <source>
        <dbReference type="SAM" id="MobiDB-lite"/>
    </source>
</evidence>
<evidence type="ECO:0000303" key="4">
    <source>
    </source>
</evidence>
<evidence type="ECO:0000303" key="5">
    <source>
    </source>
</evidence>
<evidence type="ECO:0000303" key="6">
    <source ref="1"/>
</evidence>
<evidence type="ECO:0000305" key="7"/>
<evidence type="ECO:0007744" key="8">
    <source>
    </source>
</evidence>
<organism>
    <name type="scientific">Mus musculus</name>
    <name type="common">Mouse</name>
    <dbReference type="NCBI Taxonomy" id="10090"/>
    <lineage>
        <taxon>Eukaryota</taxon>
        <taxon>Metazoa</taxon>
        <taxon>Chordata</taxon>
        <taxon>Craniata</taxon>
        <taxon>Vertebrata</taxon>
        <taxon>Euteleostomi</taxon>
        <taxon>Mammalia</taxon>
        <taxon>Eutheria</taxon>
        <taxon>Euarchontoglires</taxon>
        <taxon>Glires</taxon>
        <taxon>Rodentia</taxon>
        <taxon>Myomorpha</taxon>
        <taxon>Muroidea</taxon>
        <taxon>Muridae</taxon>
        <taxon>Murinae</taxon>
        <taxon>Mus</taxon>
        <taxon>Mus</taxon>
    </lineage>
</organism>
<gene>
    <name type="primary">Hjurp</name>
    <name type="synonym">Fleg1</name>
</gene>
<keyword id="KW-0025">Alternative splicing</keyword>
<keyword id="KW-0131">Cell cycle</keyword>
<keyword id="KW-0137">Centromere</keyword>
<keyword id="KW-0143">Chaperone</keyword>
<keyword id="KW-0158">Chromosome</keyword>
<keyword id="KW-0238">DNA-binding</keyword>
<keyword id="KW-1017">Isopeptide bond</keyword>
<keyword id="KW-0539">Nucleus</keyword>
<keyword id="KW-0597">Phosphoprotein</keyword>
<keyword id="KW-1185">Reference proteome</keyword>
<keyword id="KW-0832">Ubl conjugation</keyword>
<protein>
    <recommendedName>
        <fullName>Holliday junction recognition protein</fullName>
    </recommendedName>
    <alternativeName>
        <fullName>Fetal liver expressing gene 1 protein homolog</fullName>
        <shortName>mFleg1</shortName>
    </alternativeName>
</protein>
<accession>Q6PG16</accession>
<accession>Q6BCZ4</accession>
<accession>Q8C9A7</accession>
<sequence>MESMGRQDRRLHQQLKESSSRFQTLMKRLIAKYNQPFEDDPLVEMRTLTYETPQGLRVWGGKLMKKEDKEYTQVIDRLNGQAPEGDSESSGADTSLEENWPSCSSAMREASGDPRQRQPAVPGNTLETDLRRKYLTQVDILPQDEEYFKNAEKRGGKDTVMTWVPSVTSSVTPASGCQDAISAKSSGGPEVSALSSRGQGPSYPCPADMAIVARSDGLSLLGTSSNSVSSQSFEVDDLCNVTISDLYEGMMHSMSRLLRSKPSCIISTKTYINQSWKLRRRPSRKQGLHKNRTHCPRSKPSQRSARKGPASCSEPGKEAGILRDYGNLLHVAPHKTGLELKSVSLEGSKRQVHKSSPAWKELQMMPQKDLDLNRERENRVMTLQWLISPVKVVPRPRMLPSQVEKWYREIKIKFDKLHQEYCLSSGKQPRLTDPTESWAVDVYRSGSKSPGSRQDVETCRPSSPFGREKTERPGEALEDLRGNGKSVKTKSCLLRSCPSPEGSPSRSPSHSQLSSGLQEHNSEPTGKAVWPSTAISAPSIGSPGCGKDNYYELKKEFNRLYQKYCLSPQRAKVTSCGRVSPMKAAAALPCQSEHLKRLNPDSPQQSSQKRSISPGCHRRVLQDSTAQTASTLVRDSWLPTKRCKLSYPVACAHQAKFHDTSGASGWP</sequence>
<name>HJURP_MOUSE</name>
<feature type="chain" id="PRO_0000378154" description="Holliday junction recognition protein">
    <location>
        <begin position="1"/>
        <end position="667"/>
    </location>
</feature>
<feature type="region of interest" description="Disordered" evidence="3">
    <location>
        <begin position="78"/>
        <end position="126"/>
    </location>
</feature>
<feature type="region of interest" description="Disordered" evidence="3">
    <location>
        <begin position="181"/>
        <end position="201"/>
    </location>
</feature>
<feature type="region of interest" description="Disordered" evidence="3">
    <location>
        <begin position="279"/>
        <end position="317"/>
    </location>
</feature>
<feature type="region of interest" description="Disordered" evidence="3">
    <location>
        <begin position="443"/>
        <end position="530"/>
    </location>
</feature>
<feature type="region of interest" description="Disordered" evidence="3">
    <location>
        <begin position="596"/>
        <end position="617"/>
    </location>
</feature>
<feature type="compositionally biased region" description="Basic residues" evidence="3">
    <location>
        <begin position="279"/>
        <end position="297"/>
    </location>
</feature>
<feature type="compositionally biased region" description="Basic and acidic residues" evidence="3">
    <location>
        <begin position="466"/>
        <end position="482"/>
    </location>
</feature>
<feature type="compositionally biased region" description="Low complexity" evidence="3">
    <location>
        <begin position="496"/>
        <end position="515"/>
    </location>
</feature>
<feature type="compositionally biased region" description="Polar residues" evidence="3">
    <location>
        <begin position="601"/>
        <end position="611"/>
    </location>
</feature>
<feature type="modified residue" description="Phosphoserine" evidence="2">
    <location>
        <position position="169"/>
    </location>
</feature>
<feature type="modified residue" description="Phosphoserine" evidence="2">
    <location>
        <position position="185"/>
    </location>
</feature>
<feature type="modified residue" description="Phosphoserine" evidence="2">
    <location>
        <position position="195"/>
    </location>
</feature>
<feature type="modified residue" description="Phosphoserine" evidence="8">
    <location>
        <position position="388"/>
    </location>
</feature>
<feature type="modified residue" description="Phosphoserine" evidence="2">
    <location>
        <position position="424"/>
    </location>
</feature>
<feature type="modified residue" description="Phosphoserine" evidence="2">
    <location>
        <position position="449"/>
    </location>
</feature>
<feature type="modified residue" description="Phosphoserine" evidence="2">
    <location>
        <position position="462"/>
    </location>
</feature>
<feature type="modified residue" description="Phosphoserine" evidence="2">
    <location>
        <position position="567"/>
    </location>
</feature>
<feature type="modified residue" description="Phosphoserine" evidence="2">
    <location>
        <position position="613"/>
    </location>
</feature>
<feature type="cross-link" description="Glycyl lysine isopeptide (Lys-Gly) (interchain with G-Cter in SUMO2)" evidence="2">
    <location>
        <position position="554"/>
    </location>
</feature>
<feature type="splice variant" id="VSP_037515" description="In isoform 3." evidence="4 5">
    <location>
        <begin position="74"/>
        <end position="149"/>
    </location>
</feature>
<feature type="splice variant" id="VSP_037516" description="In isoform 2." evidence="6">
    <location>
        <begin position="286"/>
        <end position="302"/>
    </location>
</feature>
<feature type="sequence conflict" description="In Ref. 2; BAC31301 and 3; AAI31920." evidence="7" ref="2 3">
    <original>H</original>
    <variation>Q</variation>
    <location>
        <position position="12"/>
    </location>
</feature>
<feature type="sequence conflict" description="In Ref. 2; BAC31301 and 3; AAI31920." evidence="7" ref="2 3">
    <original>K</original>
    <variation>N</variation>
    <location>
        <position position="16"/>
    </location>
</feature>
<feature type="sequence conflict" description="In Ref. 2; BAC31301 and 3; AAI31920." evidence="7" ref="2 3">
    <original>S</original>
    <variation>R</variation>
    <location>
        <position position="19"/>
    </location>
</feature>
<feature type="sequence conflict" description="In Ref. 2; BAC31301 and 3; AAI31920." evidence="7" ref="2 3">
    <original>R</original>
    <variation>T</variation>
    <location>
        <position position="46"/>
    </location>
</feature>
<feature type="sequence conflict" description="In Ref. 2; BAC31301 and 3; AAI31920." evidence="7" ref="2 3">
    <original>E</original>
    <variation>G</variation>
    <location>
        <position position="190"/>
    </location>
</feature>
<feature type="sequence conflict" description="In Ref. 2; BAC31301 and 3; AAI31920." evidence="7" ref="2 3">
    <original>D</original>
    <variation>N</variation>
    <location>
        <position position="245"/>
    </location>
</feature>
<feature type="sequence conflict" description="In Ref. 2; BAC31301 and 3; AAI31920." evidence="7" ref="2 3">
    <original>P</original>
    <variation>L</variation>
    <location>
        <position position="262"/>
    </location>
</feature>
<feature type="sequence conflict" description="In Ref. 2; BAC31301 and 3; AAI31920." evidence="7" ref="2 3">
    <original>P</original>
    <variation>H</variation>
    <location>
        <position position="315"/>
    </location>
</feature>
<feature type="sequence conflict" description="In Ref. 2; BAC31301 and 3; AAI31920." evidence="7" ref="2 3">
    <original>S</original>
    <variation>F</variation>
    <location>
        <position position="355"/>
    </location>
</feature>
<feature type="sequence conflict" description="In Ref. 2; BAC31301 and 3; AAI31920." evidence="7" ref="2 3">
    <original>V</original>
    <variation>G</variation>
    <location>
        <position position="380"/>
    </location>
</feature>
<feature type="sequence conflict" description="In Ref. 2; BAC31301 and 3; AAI31920." evidence="7" ref="2 3">
    <original>S</original>
    <variation>C</variation>
    <location>
        <position position="539"/>
    </location>
</feature>
<feature type="sequence conflict" description="In Ref. 1; BAD36742, 2; BAC31301 and 3; AAI31920." evidence="7" ref="1 2 3">
    <original>Y</original>
    <variation>D</variation>
    <location>
        <position position="551"/>
    </location>
</feature>
<feature type="sequence conflict" description="In Ref. 2; BAC31301 and 3; AAI31920." evidence="7" ref="2 3">
    <original>A</original>
    <variation>P</variation>
    <location>
        <position position="626"/>
    </location>
</feature>
<feature type="sequence conflict" description="In Ref. 2; BAC31301 and 3; AAI31920." evidence="7" ref="2 3">
    <original>DS</original>
    <variation>EP</variation>
    <location>
        <begin position="635"/>
        <end position="636"/>
    </location>
</feature>
<feature type="sequence conflict" description="In Ref. 2; BAC31301 and 3; AAI31920." evidence="7" ref="2 3">
    <original>C</original>
    <variation>R</variation>
    <location>
        <position position="643"/>
    </location>
</feature>
<feature type="sequence conflict" description="In Ref. 2; BAC31301 and 3; AAI31920." evidence="7" ref="2 3">
    <original>FHD</original>
    <variation>SHN</variation>
    <location>
        <begin position="657"/>
        <end position="659"/>
    </location>
</feature>
<comment type="function">
    <text evidence="2">Centromeric protein that plays a central role in the incorporation and maintenance of histone H3-like variant CENPA at centromeres. Acts as a specific chaperone for CENPA and is required for the incorporation of newly synthesized CENPA molecules into nucleosomes at replicated centromeres. Prevents CENPA-H4 tetramerization and prevents premature DNA binding by the CENPA-H4 tetramer. Directly binds Holliday junctions.</text>
</comment>
<comment type="subunit">
    <text evidence="2">Interacts with CENPA (via CATD domain); the interaction is direct and specific for CENPA since it does not interact with H3.1- or H3.3-containing nucleosomes. Heterotrimer composed of HJURP, CENPA and histone H4, where HJURP interacts with the dimer formed by CENPA and histone H4 and prevents tetramerization of CENPA and H4. Identified in a centromere complex containing histones H2A, H2B and H4, and at least CENPA, CENPB, CENPC, CENPT, CENPN, HJURP, SUPT16H, SSRP1 and RSF1. Interacts with 14-3-3 family members in a phosphorylation-dependent manner. Interacts with MSH5 and NBN.</text>
</comment>
<comment type="subcellular location">
    <subcellularLocation>
        <location>Nucleus</location>
        <location>Nucleolus</location>
    </subcellularLocation>
    <subcellularLocation>
        <location>Chromosome</location>
        <location>Centromere</location>
    </subcellularLocation>
    <text evidence="1">Localizes in centromeres during late telophase and early G1, when CENPA nucleosomes are assembled. Localizes to nucleolus during S phase, nucleolus site being often related to storage (By similarity).</text>
</comment>
<comment type="alternative products">
    <event type="alternative splicing"/>
    <isoform>
        <id>Q6PG16-1</id>
        <name>1</name>
        <sequence type="displayed"/>
    </isoform>
    <isoform>
        <id>Q6PG16-2</id>
        <name>2</name>
        <sequence type="described" ref="VSP_037516"/>
    </isoform>
    <isoform>
        <id>Q6PG16-3</id>
        <name>3</name>
        <sequence type="described" ref="VSP_037515"/>
    </isoform>
</comment>
<dbReference type="EMBL" id="AB162219">
    <property type="protein sequence ID" value="BAD36742.1"/>
    <property type="molecule type" value="mRNA"/>
</dbReference>
<dbReference type="EMBL" id="AK042589">
    <property type="protein sequence ID" value="BAC31301.1"/>
    <property type="molecule type" value="mRNA"/>
</dbReference>
<dbReference type="EMBL" id="BC057309">
    <property type="protein sequence ID" value="AAH57309.1"/>
    <property type="molecule type" value="mRNA"/>
</dbReference>
<dbReference type="EMBL" id="BC131919">
    <property type="protein sequence ID" value="AAI31920.1"/>
    <property type="molecule type" value="mRNA"/>
</dbReference>
<dbReference type="CCDS" id="CCDS15144.1">
    <molecule id="Q6PG16-1"/>
</dbReference>
<dbReference type="RefSeq" id="NP_766093.1">
    <property type="nucleotide sequence ID" value="NM_172505.4"/>
</dbReference>
<dbReference type="RefSeq" id="NP_941054.2">
    <property type="nucleotide sequence ID" value="NM_198652.2"/>
</dbReference>
<dbReference type="RefSeq" id="XP_006529783.1">
    <property type="nucleotide sequence ID" value="XM_006529720.3"/>
</dbReference>
<dbReference type="SMR" id="Q6PG16"/>
<dbReference type="BioGRID" id="237854">
    <property type="interactions" value="5"/>
</dbReference>
<dbReference type="FunCoup" id="Q6PG16">
    <property type="interactions" value="338"/>
</dbReference>
<dbReference type="STRING" id="10090.ENSMUSP00000054263"/>
<dbReference type="GlyGen" id="Q6PG16">
    <property type="glycosylation" value="1 site"/>
</dbReference>
<dbReference type="iPTMnet" id="Q6PG16"/>
<dbReference type="PhosphoSitePlus" id="Q6PG16"/>
<dbReference type="jPOST" id="Q6PG16"/>
<dbReference type="PaxDb" id="10090-ENSMUSP00000054263"/>
<dbReference type="ProteomicsDB" id="273143">
    <molecule id="Q6PG16-1"/>
</dbReference>
<dbReference type="ProteomicsDB" id="273144">
    <molecule id="Q6PG16-2"/>
</dbReference>
<dbReference type="ProteomicsDB" id="273145">
    <molecule id="Q6PG16-3"/>
</dbReference>
<dbReference type="Pumba" id="Q6PG16"/>
<dbReference type="DNASU" id="381280"/>
<dbReference type="GeneID" id="212427"/>
<dbReference type="GeneID" id="381280"/>
<dbReference type="KEGG" id="mmu:212427"/>
<dbReference type="KEGG" id="mmu:381280"/>
<dbReference type="AGR" id="MGI:2685821"/>
<dbReference type="CTD" id="55355"/>
<dbReference type="MGI" id="MGI:2685821">
    <property type="gene designation" value="Hjurp"/>
</dbReference>
<dbReference type="eggNOG" id="ENOG502SJZT">
    <property type="taxonomic scope" value="Eukaryota"/>
</dbReference>
<dbReference type="InParanoid" id="Q6PG16"/>
<dbReference type="OrthoDB" id="9948556at2759"/>
<dbReference type="PhylomeDB" id="Q6PG16"/>
<dbReference type="Reactome" id="R-MMU-606279">
    <property type="pathway name" value="Deposition of new CENPA-containing nucleosomes at the centromere"/>
</dbReference>
<dbReference type="BioGRID-ORCS" id="212427">
    <property type="hits" value="4 hits in 17 CRISPR screens"/>
</dbReference>
<dbReference type="BioGRID-ORCS" id="381280">
    <property type="hits" value="24 hits in 77 CRISPR screens"/>
</dbReference>
<dbReference type="ChiTaRS" id="Hjurp">
    <property type="organism name" value="mouse"/>
</dbReference>
<dbReference type="PRO" id="PR:Q6PG16"/>
<dbReference type="Proteomes" id="UP000000589">
    <property type="component" value="Unplaced"/>
</dbReference>
<dbReference type="RNAct" id="Q6PG16">
    <property type="molecule type" value="protein"/>
</dbReference>
<dbReference type="GO" id="GO:0000775">
    <property type="term" value="C:chromosome, centromeric region"/>
    <property type="evidence" value="ECO:0000314"/>
    <property type="project" value="MGI"/>
</dbReference>
<dbReference type="GO" id="GO:0000776">
    <property type="term" value="C:kinetochore"/>
    <property type="evidence" value="ECO:0000250"/>
    <property type="project" value="UniProtKB"/>
</dbReference>
<dbReference type="GO" id="GO:0005730">
    <property type="term" value="C:nucleolus"/>
    <property type="evidence" value="ECO:0000250"/>
    <property type="project" value="UniProtKB"/>
</dbReference>
<dbReference type="GO" id="GO:0003677">
    <property type="term" value="F:DNA binding"/>
    <property type="evidence" value="ECO:0007669"/>
    <property type="project" value="UniProtKB-KW"/>
</dbReference>
<dbReference type="GO" id="GO:0042393">
    <property type="term" value="F:histone binding"/>
    <property type="evidence" value="ECO:0007669"/>
    <property type="project" value="InterPro"/>
</dbReference>
<dbReference type="GO" id="GO:0034080">
    <property type="term" value="P:CENP-A containing chromatin assembly"/>
    <property type="evidence" value="ECO:0000250"/>
    <property type="project" value="UniProtKB"/>
</dbReference>
<dbReference type="GO" id="GO:0007059">
    <property type="term" value="P:chromosome segregation"/>
    <property type="evidence" value="ECO:0000250"/>
    <property type="project" value="UniProtKB"/>
</dbReference>
<dbReference type="Gene3D" id="6.10.250.2320">
    <property type="match status" value="1"/>
</dbReference>
<dbReference type="InterPro" id="IPR022102">
    <property type="entry name" value="HJURP_C"/>
</dbReference>
<dbReference type="InterPro" id="IPR021052">
    <property type="entry name" value="HJURP_central_dom"/>
</dbReference>
<dbReference type="InterPro" id="IPR018465">
    <property type="entry name" value="Scm3/HJURP"/>
</dbReference>
<dbReference type="PANTHER" id="PTHR15992">
    <property type="entry name" value="HOLLIDAY JUNCTION RECOGNITION PROTEIN"/>
    <property type="match status" value="1"/>
</dbReference>
<dbReference type="PANTHER" id="PTHR15992:SF5">
    <property type="entry name" value="HOLLIDAY JUNCTION RECOGNITION PROTEIN"/>
    <property type="match status" value="1"/>
</dbReference>
<dbReference type="Pfam" id="PF12347">
    <property type="entry name" value="HJURP_C"/>
    <property type="match status" value="2"/>
</dbReference>
<dbReference type="Pfam" id="PF12346">
    <property type="entry name" value="HJURP_mid"/>
    <property type="match status" value="1"/>
</dbReference>
<dbReference type="Pfam" id="PF10384">
    <property type="entry name" value="Scm3"/>
    <property type="match status" value="1"/>
</dbReference>